<proteinExistence type="inferred from homology"/>
<sequence>MANIKSAKKRAIQSEKRRKHNASRRSMVRTFIKKVYAAISSGDKKAAETAFAQMQPIIDRHACKGLIHKNKAARHKSNLTAQINAMSEDSLLKKRRSEGCEFKAPEKPV</sequence>
<accession>C4K3I3</accession>
<feature type="chain" id="PRO_1000206502" description="Small ribosomal subunit protein bS20">
    <location>
        <begin position="1"/>
        <end position="109"/>
    </location>
</feature>
<feature type="region of interest" description="Disordered" evidence="2">
    <location>
        <begin position="1"/>
        <end position="26"/>
    </location>
</feature>
<reference key="1">
    <citation type="journal article" date="2009" name="Proc. Natl. Acad. Sci. U.S.A.">
        <title>Hamiltonella defensa, genome evolution of protective bacterial endosymbiont from pathogenic ancestors.</title>
        <authorList>
            <person name="Degnan P.H."/>
            <person name="Yu Y."/>
            <person name="Sisneros N."/>
            <person name="Wing R.A."/>
            <person name="Moran N.A."/>
        </authorList>
    </citation>
    <scope>NUCLEOTIDE SEQUENCE [LARGE SCALE GENOMIC DNA]</scope>
    <source>
        <strain>5AT</strain>
    </source>
</reference>
<name>RS20_HAMD5</name>
<organism>
    <name type="scientific">Hamiltonella defensa subsp. Acyrthosiphon pisum (strain 5AT)</name>
    <dbReference type="NCBI Taxonomy" id="572265"/>
    <lineage>
        <taxon>Bacteria</taxon>
        <taxon>Pseudomonadati</taxon>
        <taxon>Pseudomonadota</taxon>
        <taxon>Gammaproteobacteria</taxon>
        <taxon>Enterobacterales</taxon>
        <taxon>Enterobacteriaceae</taxon>
        <taxon>aphid secondary symbionts</taxon>
        <taxon>Candidatus Hamiltonella</taxon>
    </lineage>
</organism>
<keyword id="KW-0687">Ribonucleoprotein</keyword>
<keyword id="KW-0689">Ribosomal protein</keyword>
<keyword id="KW-0694">RNA-binding</keyword>
<keyword id="KW-0699">rRNA-binding</keyword>
<dbReference type="EMBL" id="CP001277">
    <property type="protein sequence ID" value="ACQ67126.1"/>
    <property type="molecule type" value="Genomic_DNA"/>
</dbReference>
<dbReference type="SMR" id="C4K3I3"/>
<dbReference type="STRING" id="572265.HDEF_0369"/>
<dbReference type="KEGG" id="hde:HDEF_0369"/>
<dbReference type="eggNOG" id="COG0268">
    <property type="taxonomic scope" value="Bacteria"/>
</dbReference>
<dbReference type="HOGENOM" id="CLU_160655_3_0_6"/>
<dbReference type="Proteomes" id="UP000002334">
    <property type="component" value="Chromosome"/>
</dbReference>
<dbReference type="GO" id="GO:0005829">
    <property type="term" value="C:cytosol"/>
    <property type="evidence" value="ECO:0007669"/>
    <property type="project" value="TreeGrafter"/>
</dbReference>
<dbReference type="GO" id="GO:0015935">
    <property type="term" value="C:small ribosomal subunit"/>
    <property type="evidence" value="ECO:0007669"/>
    <property type="project" value="TreeGrafter"/>
</dbReference>
<dbReference type="GO" id="GO:0070181">
    <property type="term" value="F:small ribosomal subunit rRNA binding"/>
    <property type="evidence" value="ECO:0007669"/>
    <property type="project" value="TreeGrafter"/>
</dbReference>
<dbReference type="GO" id="GO:0003735">
    <property type="term" value="F:structural constituent of ribosome"/>
    <property type="evidence" value="ECO:0007669"/>
    <property type="project" value="InterPro"/>
</dbReference>
<dbReference type="GO" id="GO:0006412">
    <property type="term" value="P:translation"/>
    <property type="evidence" value="ECO:0007669"/>
    <property type="project" value="UniProtKB-UniRule"/>
</dbReference>
<dbReference type="FunFam" id="1.20.58.110:FF:000001">
    <property type="entry name" value="30S ribosomal protein S20"/>
    <property type="match status" value="1"/>
</dbReference>
<dbReference type="Gene3D" id="1.20.58.110">
    <property type="entry name" value="Ribosomal protein S20"/>
    <property type="match status" value="1"/>
</dbReference>
<dbReference type="HAMAP" id="MF_00500">
    <property type="entry name" value="Ribosomal_bS20"/>
    <property type="match status" value="1"/>
</dbReference>
<dbReference type="InterPro" id="IPR002583">
    <property type="entry name" value="Ribosomal_bS20"/>
</dbReference>
<dbReference type="InterPro" id="IPR036510">
    <property type="entry name" value="Ribosomal_bS20_sf"/>
</dbReference>
<dbReference type="NCBIfam" id="TIGR00029">
    <property type="entry name" value="S20"/>
    <property type="match status" value="1"/>
</dbReference>
<dbReference type="PANTHER" id="PTHR33398">
    <property type="entry name" value="30S RIBOSOMAL PROTEIN S20"/>
    <property type="match status" value="1"/>
</dbReference>
<dbReference type="PANTHER" id="PTHR33398:SF1">
    <property type="entry name" value="SMALL RIBOSOMAL SUBUNIT PROTEIN BS20C"/>
    <property type="match status" value="1"/>
</dbReference>
<dbReference type="Pfam" id="PF01649">
    <property type="entry name" value="Ribosomal_S20p"/>
    <property type="match status" value="1"/>
</dbReference>
<dbReference type="SUPFAM" id="SSF46992">
    <property type="entry name" value="Ribosomal protein S20"/>
    <property type="match status" value="1"/>
</dbReference>
<comment type="function">
    <text evidence="1">Binds directly to 16S ribosomal RNA.</text>
</comment>
<comment type="similarity">
    <text evidence="1">Belongs to the bacterial ribosomal protein bS20 family.</text>
</comment>
<evidence type="ECO:0000255" key="1">
    <source>
        <dbReference type="HAMAP-Rule" id="MF_00500"/>
    </source>
</evidence>
<evidence type="ECO:0000256" key="2">
    <source>
        <dbReference type="SAM" id="MobiDB-lite"/>
    </source>
</evidence>
<evidence type="ECO:0000305" key="3"/>
<protein>
    <recommendedName>
        <fullName evidence="1">Small ribosomal subunit protein bS20</fullName>
    </recommendedName>
    <alternativeName>
        <fullName evidence="3">30S ribosomal protein S20</fullName>
    </alternativeName>
</protein>
<gene>
    <name evidence="1" type="primary">rpsT</name>
    <name type="ordered locus">HDEF_0369</name>
</gene>